<name>ORN_NEIMB</name>
<accession>Q9JXW1</accession>
<reference key="1">
    <citation type="journal article" date="2000" name="Science">
        <title>Complete genome sequence of Neisseria meningitidis serogroup B strain MC58.</title>
        <authorList>
            <person name="Tettelin H."/>
            <person name="Saunders N.J."/>
            <person name="Heidelberg J.F."/>
            <person name="Jeffries A.C."/>
            <person name="Nelson K.E."/>
            <person name="Eisen J.A."/>
            <person name="Ketchum K.A."/>
            <person name="Hood D.W."/>
            <person name="Peden J.F."/>
            <person name="Dodson R.J."/>
            <person name="Nelson W.C."/>
            <person name="Gwinn M.L."/>
            <person name="DeBoy R.T."/>
            <person name="Peterson J.D."/>
            <person name="Hickey E.K."/>
            <person name="Haft D.H."/>
            <person name="Salzberg S.L."/>
            <person name="White O."/>
            <person name="Fleischmann R.D."/>
            <person name="Dougherty B.A."/>
            <person name="Mason T.M."/>
            <person name="Ciecko A."/>
            <person name="Parksey D.S."/>
            <person name="Blair E."/>
            <person name="Cittone H."/>
            <person name="Clark E.B."/>
            <person name="Cotton M.D."/>
            <person name="Utterback T.R."/>
            <person name="Khouri H.M."/>
            <person name="Qin H."/>
            <person name="Vamathevan J.J."/>
            <person name="Gill J."/>
            <person name="Scarlato V."/>
            <person name="Masignani V."/>
            <person name="Pizza M."/>
            <person name="Grandi G."/>
            <person name="Sun L."/>
            <person name="Smith H.O."/>
            <person name="Fraser C.M."/>
            <person name="Moxon E.R."/>
            <person name="Rappuoli R."/>
            <person name="Venter J.C."/>
        </authorList>
    </citation>
    <scope>NUCLEOTIDE SEQUENCE [LARGE SCALE GENOMIC DNA]</scope>
    <source>
        <strain>ATCC BAA-335 / MC58</strain>
    </source>
</reference>
<proteinExistence type="inferred from homology"/>
<sequence length="187" mass="21760">MQDKNNLCWLDMEMTGLNPETDRIIEVAMIITDSDLNVLAQSEVYAVHQSDDVLNKMDEWNTATHGRTGLTQRVRESSHTEAEVEQKLLDFMSEWVPGRATPMCGNSIHQDRRFMVKYMPKLENYFHYRNLDVSTLKELAKRWNPPVAKSVVKRGSHKALDDILESIEEMRHYREHFLISAPRAEAQ</sequence>
<comment type="function">
    <text evidence="1">3'-to-5' exoribonuclease specific for small oligoribonucleotides.</text>
</comment>
<comment type="subcellular location">
    <subcellularLocation>
        <location evidence="1">Cytoplasm</location>
    </subcellularLocation>
</comment>
<comment type="similarity">
    <text evidence="1">Belongs to the oligoribonuclease family.</text>
</comment>
<feature type="chain" id="PRO_0000111054" description="Oligoribonuclease">
    <location>
        <begin position="1"/>
        <end position="187"/>
    </location>
</feature>
<feature type="domain" description="Exonuclease" evidence="1">
    <location>
        <begin position="7"/>
        <end position="170"/>
    </location>
</feature>
<feature type="active site" evidence="1">
    <location>
        <position position="128"/>
    </location>
</feature>
<protein>
    <recommendedName>
        <fullName evidence="1">Oligoribonuclease</fullName>
        <ecNumber evidence="1">3.1.15.-</ecNumber>
    </recommendedName>
</protein>
<gene>
    <name evidence="1" type="primary">orn</name>
    <name type="ordered locus">NMB1863</name>
</gene>
<dbReference type="EC" id="3.1.15.-" evidence="1"/>
<dbReference type="EMBL" id="AE002098">
    <property type="protein sequence ID" value="AAF42197.1"/>
    <property type="molecule type" value="Genomic_DNA"/>
</dbReference>
<dbReference type="PIR" id="H81033">
    <property type="entry name" value="H81033"/>
</dbReference>
<dbReference type="RefSeq" id="NP_274859.1">
    <property type="nucleotide sequence ID" value="NC_003112.2"/>
</dbReference>
<dbReference type="RefSeq" id="WP_002223024.1">
    <property type="nucleotide sequence ID" value="NC_003112.2"/>
</dbReference>
<dbReference type="SMR" id="Q9JXW1"/>
<dbReference type="FunCoup" id="Q9JXW1">
    <property type="interactions" value="343"/>
</dbReference>
<dbReference type="STRING" id="122586.NMB1863"/>
<dbReference type="PaxDb" id="122586-NMB1863"/>
<dbReference type="KEGG" id="nme:NMB1863"/>
<dbReference type="PATRIC" id="fig|122586.8.peg.2381"/>
<dbReference type="HOGENOM" id="CLU_064761_2_0_4"/>
<dbReference type="InParanoid" id="Q9JXW1"/>
<dbReference type="OrthoDB" id="9801329at2"/>
<dbReference type="Proteomes" id="UP000000425">
    <property type="component" value="Chromosome"/>
</dbReference>
<dbReference type="GO" id="GO:0005737">
    <property type="term" value="C:cytoplasm"/>
    <property type="evidence" value="ECO:0007669"/>
    <property type="project" value="UniProtKB-SubCell"/>
</dbReference>
<dbReference type="GO" id="GO:0000175">
    <property type="term" value="F:3'-5'-RNA exonuclease activity"/>
    <property type="evidence" value="ECO:0007669"/>
    <property type="project" value="InterPro"/>
</dbReference>
<dbReference type="GO" id="GO:0003676">
    <property type="term" value="F:nucleic acid binding"/>
    <property type="evidence" value="ECO:0007669"/>
    <property type="project" value="InterPro"/>
</dbReference>
<dbReference type="GO" id="GO:0006259">
    <property type="term" value="P:DNA metabolic process"/>
    <property type="evidence" value="ECO:0007669"/>
    <property type="project" value="UniProtKB-ARBA"/>
</dbReference>
<dbReference type="CDD" id="cd06135">
    <property type="entry name" value="Orn"/>
    <property type="match status" value="1"/>
</dbReference>
<dbReference type="FunFam" id="3.30.420.10:FF:000143">
    <property type="entry name" value="Oligoribonuclease"/>
    <property type="match status" value="1"/>
</dbReference>
<dbReference type="Gene3D" id="3.30.420.10">
    <property type="entry name" value="Ribonuclease H-like superfamily/Ribonuclease H"/>
    <property type="match status" value="1"/>
</dbReference>
<dbReference type="HAMAP" id="MF_00045">
    <property type="entry name" value="Oligoribonuclease"/>
    <property type="match status" value="1"/>
</dbReference>
<dbReference type="InterPro" id="IPR013520">
    <property type="entry name" value="Exonuclease_RNaseT/DNA_pol3"/>
</dbReference>
<dbReference type="InterPro" id="IPR022894">
    <property type="entry name" value="Oligoribonuclease"/>
</dbReference>
<dbReference type="InterPro" id="IPR012337">
    <property type="entry name" value="RNaseH-like_sf"/>
</dbReference>
<dbReference type="InterPro" id="IPR036397">
    <property type="entry name" value="RNaseH_sf"/>
</dbReference>
<dbReference type="NCBIfam" id="NF003765">
    <property type="entry name" value="PRK05359.1"/>
    <property type="match status" value="1"/>
</dbReference>
<dbReference type="PANTHER" id="PTHR11046">
    <property type="entry name" value="OLIGORIBONUCLEASE, MITOCHONDRIAL"/>
    <property type="match status" value="1"/>
</dbReference>
<dbReference type="PANTHER" id="PTHR11046:SF0">
    <property type="entry name" value="OLIGORIBONUCLEASE, MITOCHONDRIAL"/>
    <property type="match status" value="1"/>
</dbReference>
<dbReference type="Pfam" id="PF00929">
    <property type="entry name" value="RNase_T"/>
    <property type="match status" value="1"/>
</dbReference>
<dbReference type="SMART" id="SM00479">
    <property type="entry name" value="EXOIII"/>
    <property type="match status" value="1"/>
</dbReference>
<dbReference type="SUPFAM" id="SSF53098">
    <property type="entry name" value="Ribonuclease H-like"/>
    <property type="match status" value="1"/>
</dbReference>
<keyword id="KW-0963">Cytoplasm</keyword>
<keyword id="KW-0269">Exonuclease</keyword>
<keyword id="KW-0378">Hydrolase</keyword>
<keyword id="KW-0540">Nuclease</keyword>
<keyword id="KW-1185">Reference proteome</keyword>
<evidence type="ECO:0000255" key="1">
    <source>
        <dbReference type="HAMAP-Rule" id="MF_00045"/>
    </source>
</evidence>
<organism>
    <name type="scientific">Neisseria meningitidis serogroup B (strain ATCC BAA-335 / MC58)</name>
    <dbReference type="NCBI Taxonomy" id="122586"/>
    <lineage>
        <taxon>Bacteria</taxon>
        <taxon>Pseudomonadati</taxon>
        <taxon>Pseudomonadota</taxon>
        <taxon>Betaproteobacteria</taxon>
        <taxon>Neisseriales</taxon>
        <taxon>Neisseriaceae</taxon>
        <taxon>Neisseria</taxon>
    </lineage>
</organism>